<evidence type="ECO:0000255" key="1">
    <source>
        <dbReference type="HAMAP-Rule" id="MF_01321"/>
    </source>
</evidence>
<gene>
    <name evidence="1" type="primary">rpoB</name>
    <name type="ordered locus">YPK_0340</name>
</gene>
<reference key="1">
    <citation type="submission" date="2008-02" db="EMBL/GenBank/DDBJ databases">
        <title>Complete sequence of Yersinia pseudotuberculosis YPIII.</title>
        <authorList>
            <consortium name="US DOE Joint Genome Institute"/>
            <person name="Copeland A."/>
            <person name="Lucas S."/>
            <person name="Lapidus A."/>
            <person name="Glavina del Rio T."/>
            <person name="Dalin E."/>
            <person name="Tice H."/>
            <person name="Bruce D."/>
            <person name="Goodwin L."/>
            <person name="Pitluck S."/>
            <person name="Munk A.C."/>
            <person name="Brettin T."/>
            <person name="Detter J.C."/>
            <person name="Han C."/>
            <person name="Tapia R."/>
            <person name="Schmutz J."/>
            <person name="Larimer F."/>
            <person name="Land M."/>
            <person name="Hauser L."/>
            <person name="Challacombe J.F."/>
            <person name="Green L."/>
            <person name="Lindler L.E."/>
            <person name="Nikolich M.P."/>
            <person name="Richardson P."/>
        </authorList>
    </citation>
    <scope>NUCLEOTIDE SEQUENCE [LARGE SCALE GENOMIC DNA]</scope>
    <source>
        <strain>YPIII</strain>
    </source>
</reference>
<name>RPOB_YERPY</name>
<organism>
    <name type="scientific">Yersinia pseudotuberculosis serotype O:3 (strain YPIII)</name>
    <dbReference type="NCBI Taxonomy" id="502800"/>
    <lineage>
        <taxon>Bacteria</taxon>
        <taxon>Pseudomonadati</taxon>
        <taxon>Pseudomonadota</taxon>
        <taxon>Gammaproteobacteria</taxon>
        <taxon>Enterobacterales</taxon>
        <taxon>Yersiniaceae</taxon>
        <taxon>Yersinia</taxon>
    </lineage>
</organism>
<dbReference type="EC" id="2.7.7.6" evidence="1"/>
<dbReference type="EMBL" id="CP000950">
    <property type="protein sequence ID" value="ACA66650.1"/>
    <property type="molecule type" value="Genomic_DNA"/>
</dbReference>
<dbReference type="RefSeq" id="WP_002210676.1">
    <property type="nucleotide sequence ID" value="NZ_CP009792.1"/>
</dbReference>
<dbReference type="SMR" id="B1JJJ9"/>
<dbReference type="GeneID" id="57974971"/>
<dbReference type="KEGG" id="ypy:YPK_0340"/>
<dbReference type="PATRIC" id="fig|502800.11.peg.943"/>
<dbReference type="GO" id="GO:0000428">
    <property type="term" value="C:DNA-directed RNA polymerase complex"/>
    <property type="evidence" value="ECO:0007669"/>
    <property type="project" value="UniProtKB-KW"/>
</dbReference>
<dbReference type="GO" id="GO:0003677">
    <property type="term" value="F:DNA binding"/>
    <property type="evidence" value="ECO:0007669"/>
    <property type="project" value="UniProtKB-UniRule"/>
</dbReference>
<dbReference type="GO" id="GO:0003899">
    <property type="term" value="F:DNA-directed RNA polymerase activity"/>
    <property type="evidence" value="ECO:0007669"/>
    <property type="project" value="UniProtKB-UniRule"/>
</dbReference>
<dbReference type="GO" id="GO:0032549">
    <property type="term" value="F:ribonucleoside binding"/>
    <property type="evidence" value="ECO:0007669"/>
    <property type="project" value="InterPro"/>
</dbReference>
<dbReference type="GO" id="GO:0006351">
    <property type="term" value="P:DNA-templated transcription"/>
    <property type="evidence" value="ECO:0007669"/>
    <property type="project" value="UniProtKB-UniRule"/>
</dbReference>
<dbReference type="CDD" id="cd00653">
    <property type="entry name" value="RNA_pol_B_RPB2"/>
    <property type="match status" value="1"/>
</dbReference>
<dbReference type="FunFam" id="2.30.150.10:FF:000001">
    <property type="entry name" value="DNA-directed RNA polymerase subunit beta"/>
    <property type="match status" value="1"/>
</dbReference>
<dbReference type="FunFam" id="2.40.270.10:FF:000003">
    <property type="entry name" value="DNA-directed RNA polymerase subunit beta"/>
    <property type="match status" value="1"/>
</dbReference>
<dbReference type="FunFam" id="2.40.270.10:FF:000004">
    <property type="entry name" value="DNA-directed RNA polymerase subunit beta"/>
    <property type="match status" value="1"/>
</dbReference>
<dbReference type="FunFam" id="2.40.50.100:FF:000006">
    <property type="entry name" value="DNA-directed RNA polymerase subunit beta"/>
    <property type="match status" value="1"/>
</dbReference>
<dbReference type="FunFam" id="2.40.50.150:FF:000001">
    <property type="entry name" value="DNA-directed RNA polymerase subunit beta"/>
    <property type="match status" value="1"/>
</dbReference>
<dbReference type="FunFam" id="3.90.1100.10:FF:000002">
    <property type="entry name" value="DNA-directed RNA polymerase subunit beta"/>
    <property type="match status" value="1"/>
</dbReference>
<dbReference type="FunFam" id="3.90.1110.10:FF:000001">
    <property type="entry name" value="DNA-directed RNA polymerase subunit beta"/>
    <property type="match status" value="1"/>
</dbReference>
<dbReference type="FunFam" id="3.90.1110.10:FF:000004">
    <property type="entry name" value="DNA-directed RNA polymerase subunit beta"/>
    <property type="match status" value="1"/>
</dbReference>
<dbReference type="FunFam" id="3.90.1800.10:FF:000001">
    <property type="entry name" value="DNA-directed RNA polymerase subunit beta"/>
    <property type="match status" value="1"/>
</dbReference>
<dbReference type="Gene3D" id="2.40.50.100">
    <property type="match status" value="1"/>
</dbReference>
<dbReference type="Gene3D" id="2.40.50.150">
    <property type="match status" value="1"/>
</dbReference>
<dbReference type="Gene3D" id="3.90.1100.10">
    <property type="match status" value="2"/>
</dbReference>
<dbReference type="Gene3D" id="2.30.150.10">
    <property type="entry name" value="DNA-directed RNA polymerase, beta subunit, external 1 domain"/>
    <property type="match status" value="1"/>
</dbReference>
<dbReference type="Gene3D" id="2.40.270.10">
    <property type="entry name" value="DNA-directed RNA polymerase, subunit 2, domain 6"/>
    <property type="match status" value="1"/>
</dbReference>
<dbReference type="Gene3D" id="3.90.1800.10">
    <property type="entry name" value="RNA polymerase alpha subunit dimerisation domain"/>
    <property type="match status" value="1"/>
</dbReference>
<dbReference type="Gene3D" id="3.90.1110.10">
    <property type="entry name" value="RNA polymerase Rpb2, domain 2"/>
    <property type="match status" value="1"/>
</dbReference>
<dbReference type="HAMAP" id="MF_01321">
    <property type="entry name" value="RNApol_bact_RpoB"/>
    <property type="match status" value="1"/>
</dbReference>
<dbReference type="InterPro" id="IPR042107">
    <property type="entry name" value="DNA-dir_RNA_pol_bsu_ext_1_sf"/>
</dbReference>
<dbReference type="InterPro" id="IPR019462">
    <property type="entry name" value="DNA-dir_RNA_pol_bsu_external_1"/>
</dbReference>
<dbReference type="InterPro" id="IPR015712">
    <property type="entry name" value="DNA-dir_RNA_pol_su2"/>
</dbReference>
<dbReference type="InterPro" id="IPR007120">
    <property type="entry name" value="DNA-dir_RNAP_su2_dom"/>
</dbReference>
<dbReference type="InterPro" id="IPR037033">
    <property type="entry name" value="DNA-dir_RNAP_su2_hyb_sf"/>
</dbReference>
<dbReference type="InterPro" id="IPR010243">
    <property type="entry name" value="RNA_pol_bsu_bac"/>
</dbReference>
<dbReference type="InterPro" id="IPR007121">
    <property type="entry name" value="RNA_pol_bsu_CS"/>
</dbReference>
<dbReference type="InterPro" id="IPR007644">
    <property type="entry name" value="RNA_pol_bsu_protrusion"/>
</dbReference>
<dbReference type="InterPro" id="IPR007642">
    <property type="entry name" value="RNA_pol_Rpb2_2"/>
</dbReference>
<dbReference type="InterPro" id="IPR037034">
    <property type="entry name" value="RNA_pol_Rpb2_2_sf"/>
</dbReference>
<dbReference type="InterPro" id="IPR007645">
    <property type="entry name" value="RNA_pol_Rpb2_3"/>
</dbReference>
<dbReference type="InterPro" id="IPR007641">
    <property type="entry name" value="RNA_pol_Rpb2_7"/>
</dbReference>
<dbReference type="InterPro" id="IPR014724">
    <property type="entry name" value="RNA_pol_RPB2_OB-fold"/>
</dbReference>
<dbReference type="NCBIfam" id="NF001616">
    <property type="entry name" value="PRK00405.1"/>
    <property type="match status" value="1"/>
</dbReference>
<dbReference type="NCBIfam" id="TIGR02013">
    <property type="entry name" value="rpoB"/>
    <property type="match status" value="1"/>
</dbReference>
<dbReference type="PANTHER" id="PTHR20856">
    <property type="entry name" value="DNA-DIRECTED RNA POLYMERASE I SUBUNIT 2"/>
    <property type="match status" value="1"/>
</dbReference>
<dbReference type="Pfam" id="PF04563">
    <property type="entry name" value="RNA_pol_Rpb2_1"/>
    <property type="match status" value="1"/>
</dbReference>
<dbReference type="Pfam" id="PF04561">
    <property type="entry name" value="RNA_pol_Rpb2_2"/>
    <property type="match status" value="2"/>
</dbReference>
<dbReference type="Pfam" id="PF04565">
    <property type="entry name" value="RNA_pol_Rpb2_3"/>
    <property type="match status" value="1"/>
</dbReference>
<dbReference type="Pfam" id="PF10385">
    <property type="entry name" value="RNA_pol_Rpb2_45"/>
    <property type="match status" value="1"/>
</dbReference>
<dbReference type="Pfam" id="PF00562">
    <property type="entry name" value="RNA_pol_Rpb2_6"/>
    <property type="match status" value="1"/>
</dbReference>
<dbReference type="Pfam" id="PF04560">
    <property type="entry name" value="RNA_pol_Rpb2_7"/>
    <property type="match status" value="1"/>
</dbReference>
<dbReference type="SUPFAM" id="SSF64484">
    <property type="entry name" value="beta and beta-prime subunits of DNA dependent RNA-polymerase"/>
    <property type="match status" value="1"/>
</dbReference>
<dbReference type="PROSITE" id="PS01166">
    <property type="entry name" value="RNA_POL_BETA"/>
    <property type="match status" value="1"/>
</dbReference>
<keyword id="KW-0240">DNA-directed RNA polymerase</keyword>
<keyword id="KW-0548">Nucleotidyltransferase</keyword>
<keyword id="KW-0804">Transcription</keyword>
<keyword id="KW-0808">Transferase</keyword>
<protein>
    <recommendedName>
        <fullName evidence="1">DNA-directed RNA polymerase subunit beta</fullName>
        <shortName evidence="1">RNAP subunit beta</shortName>
        <ecNumber evidence="1">2.7.7.6</ecNumber>
    </recommendedName>
    <alternativeName>
        <fullName evidence="1">RNA polymerase subunit beta</fullName>
    </alternativeName>
    <alternativeName>
        <fullName evidence="1">Transcriptase subunit beta</fullName>
    </alternativeName>
</protein>
<feature type="chain" id="PRO_1000141756" description="DNA-directed RNA polymerase subunit beta">
    <location>
        <begin position="1"/>
        <end position="1342"/>
    </location>
</feature>
<accession>B1JJJ9</accession>
<sequence length="1342" mass="150389">MVYSYTEKKRIRKDFGKRPQVLDIPYLLSIQLDSFQKFIEQDPEGQHGLEAAFRSVFPIQSYSGNSELQYVSYRLGEPVFDVKECQIRGVTYSAPLRVKLRLVIYEREAPEGTVKDIKEQEVYMGEIPLMTENGTFVINGTERVIVSQLHRSPGVFFDSDKGKTHSSGKVLYNARIIPYRGSWLDFEFDPKDNLFVRIDRRRKLPATIILRALNFTTAQILDLFFEKVVFEIRDNKLQMELVPERLRGETASFDIEANGKVYVEKARRITARHIRQLEKDGIDRIEVPVEYIAGKVVAKDYVDASTGELICAANMELSLDLLAKLSQAGHKQIETLFTNDLDHGAYISETLRVDPTSDRLSALVEIYRMMRPGEPPTREAAENLFENLFFSEDRYDLSAVGRMKFNRSLLRDEIEGSGILSKEDITEVMKKLIDIRNGRGEVDDIDHLGNRRIRSVGEMAENQFRVGLVRVERAVKERLSLGDLDTLMPQDMINAKPISAAVKEFFGSSQLSQFMDQNNPLSEITHKRRISALGPGGLTRERAGFEVRDVHPTHYGRVCPIETPEGPNIGLINSLSVYAQTNEYGFLETPYRRVRDGVVTDEINYLSAIEEGNFVIAQANSNLDDEGRFLEDLVTCRSKGESSLFSREQVDYMDVSTQQIVSVGASLIPFLEHDDANRALMGANMQRQAVPTLRADKPLVGTGMERAVAVDSGVTSVAKRGGTVQYVDASRIVIKVNEDEMHPGEAGIDIYNLTKYTRSNQNTCINQMPCVNLGEPIERGDVLADGPSTDLGELALGQNMRVAFMPWNGYNFEDSILVSERVVQEDRFTTIHIQELACVSRDTKLGPEEITADIPNVGEAALSKLDESGIVYIGAEVTGGDILVGKVTPKGETQLTPEEKLLRAIFGEKASDVKDSSLRVPNGVSGTVIDVQVFTRDGVEKDKRALEIEEMQLKQAKKDLTEELQILEAGLFARIHAVLVSGGIEAEKLSKLPRERWLELGLTDEDKQNQLEQLAEQYDEMKSEFEKKMDAKRRKITQGDDLAPGVLKIVKVYLAVKRQIQPGDKMAGRHGNKGVISKINPIEDMPYDENGTPVDIVLNPLGVPSRMNIGQILETHLGMAAKGIGEKINAMLKKQEEVAKLREFIQKAYDLGDNVCQKVDLSTFTDDEVLRLAENLKKGMPIATPVFDGATEKEIKELLQLGGLPTSGQITLFDGRTGEQFERQVTVGYMYMLKLNHLVDDKMHARSTGSYSLVTQQPLGGKAQFGGQRFGEMEVWALEAYGAAYTLQEMLTVKSDDVNGRTKMYKNIVDGDHRMEPGMPESFNVLLKEIRSLGINIELEEE</sequence>
<proteinExistence type="inferred from homology"/>
<comment type="function">
    <text evidence="1">DNA-dependent RNA polymerase catalyzes the transcription of DNA into RNA using the four ribonucleoside triphosphates as substrates.</text>
</comment>
<comment type="catalytic activity">
    <reaction evidence="1">
        <text>RNA(n) + a ribonucleoside 5'-triphosphate = RNA(n+1) + diphosphate</text>
        <dbReference type="Rhea" id="RHEA:21248"/>
        <dbReference type="Rhea" id="RHEA-COMP:14527"/>
        <dbReference type="Rhea" id="RHEA-COMP:17342"/>
        <dbReference type="ChEBI" id="CHEBI:33019"/>
        <dbReference type="ChEBI" id="CHEBI:61557"/>
        <dbReference type="ChEBI" id="CHEBI:140395"/>
        <dbReference type="EC" id="2.7.7.6"/>
    </reaction>
</comment>
<comment type="subunit">
    <text evidence="1">The RNAP catalytic core consists of 2 alpha, 1 beta, 1 beta' and 1 omega subunit. When a sigma factor is associated with the core the holoenzyme is formed, which can initiate transcription.</text>
</comment>
<comment type="similarity">
    <text evidence="1">Belongs to the RNA polymerase beta chain family.</text>
</comment>